<dbReference type="EC" id="2.1.1.33" evidence="2"/>
<dbReference type="EMBL" id="CP000509">
    <property type="protein sequence ID" value="ABL83417.1"/>
    <property type="molecule type" value="Genomic_DNA"/>
</dbReference>
<dbReference type="RefSeq" id="WP_011757347.1">
    <property type="nucleotide sequence ID" value="NC_008699.1"/>
</dbReference>
<dbReference type="SMR" id="A1SNN2"/>
<dbReference type="STRING" id="196162.Noca_3919"/>
<dbReference type="KEGG" id="nca:Noca_3919"/>
<dbReference type="eggNOG" id="COG0220">
    <property type="taxonomic scope" value="Bacteria"/>
</dbReference>
<dbReference type="HOGENOM" id="CLU_050910_0_0_11"/>
<dbReference type="OrthoDB" id="9802090at2"/>
<dbReference type="UniPathway" id="UPA00989"/>
<dbReference type="Proteomes" id="UP000000640">
    <property type="component" value="Chromosome"/>
</dbReference>
<dbReference type="GO" id="GO:0043527">
    <property type="term" value="C:tRNA methyltransferase complex"/>
    <property type="evidence" value="ECO:0007669"/>
    <property type="project" value="TreeGrafter"/>
</dbReference>
<dbReference type="GO" id="GO:0008176">
    <property type="term" value="F:tRNA (guanine(46)-N7)-methyltransferase activity"/>
    <property type="evidence" value="ECO:0007669"/>
    <property type="project" value="UniProtKB-UniRule"/>
</dbReference>
<dbReference type="Gene3D" id="3.40.50.150">
    <property type="entry name" value="Vaccinia Virus protein VP39"/>
    <property type="match status" value="1"/>
</dbReference>
<dbReference type="HAMAP" id="MF_01057">
    <property type="entry name" value="tRNA_methyltr_TrmB"/>
    <property type="match status" value="1"/>
</dbReference>
<dbReference type="InterPro" id="IPR029063">
    <property type="entry name" value="SAM-dependent_MTases_sf"/>
</dbReference>
<dbReference type="InterPro" id="IPR003358">
    <property type="entry name" value="tRNA_(Gua-N-7)_MeTrfase_Trmb"/>
</dbReference>
<dbReference type="InterPro" id="IPR055361">
    <property type="entry name" value="tRNA_methyltr_TrmB_bact"/>
</dbReference>
<dbReference type="NCBIfam" id="TIGR00091">
    <property type="entry name" value="tRNA (guanosine(46)-N7)-methyltransferase TrmB"/>
    <property type="match status" value="1"/>
</dbReference>
<dbReference type="PANTHER" id="PTHR23417">
    <property type="entry name" value="3-DEOXY-D-MANNO-OCTULOSONIC-ACID TRANSFERASE/TRNA GUANINE-N 7 - -METHYLTRANSFERASE"/>
    <property type="match status" value="1"/>
</dbReference>
<dbReference type="PANTHER" id="PTHR23417:SF14">
    <property type="entry name" value="PENTACOTRIPEPTIDE-REPEAT REGION OF PRORP DOMAIN-CONTAINING PROTEIN"/>
    <property type="match status" value="1"/>
</dbReference>
<dbReference type="Pfam" id="PF02390">
    <property type="entry name" value="Methyltransf_4"/>
    <property type="match status" value="1"/>
</dbReference>
<dbReference type="SUPFAM" id="SSF53335">
    <property type="entry name" value="S-adenosyl-L-methionine-dependent methyltransferases"/>
    <property type="match status" value="1"/>
</dbReference>
<dbReference type="PROSITE" id="PS51625">
    <property type="entry name" value="SAM_MT_TRMB"/>
    <property type="match status" value="1"/>
</dbReference>
<organism>
    <name type="scientific">Nocardioides sp. (strain ATCC BAA-499 / JS614)</name>
    <dbReference type="NCBI Taxonomy" id="196162"/>
    <lineage>
        <taxon>Bacteria</taxon>
        <taxon>Bacillati</taxon>
        <taxon>Actinomycetota</taxon>
        <taxon>Actinomycetes</taxon>
        <taxon>Propionibacteriales</taxon>
        <taxon>Nocardioidaceae</taxon>
        <taxon>Nocardioides</taxon>
    </lineage>
</organism>
<name>TRMB_NOCSJ</name>
<feature type="chain" id="PRO_0000288191" description="tRNA (guanine-N(7)-)-methyltransferase">
    <location>
        <begin position="1"/>
        <end position="248"/>
    </location>
</feature>
<feature type="active site" evidence="1">
    <location>
        <position position="155"/>
    </location>
</feature>
<feature type="binding site" evidence="2">
    <location>
        <position position="80"/>
    </location>
    <ligand>
        <name>S-adenosyl-L-methionine</name>
        <dbReference type="ChEBI" id="CHEBI:59789"/>
    </ligand>
</feature>
<feature type="binding site" evidence="2">
    <location>
        <position position="105"/>
    </location>
    <ligand>
        <name>S-adenosyl-L-methionine</name>
        <dbReference type="ChEBI" id="CHEBI:59789"/>
    </ligand>
</feature>
<feature type="binding site" evidence="2">
    <location>
        <position position="132"/>
    </location>
    <ligand>
        <name>S-adenosyl-L-methionine</name>
        <dbReference type="ChEBI" id="CHEBI:59789"/>
    </ligand>
</feature>
<feature type="binding site" evidence="2">
    <location>
        <position position="155"/>
    </location>
    <ligand>
        <name>S-adenosyl-L-methionine</name>
        <dbReference type="ChEBI" id="CHEBI:59789"/>
    </ligand>
</feature>
<feature type="binding site" evidence="2">
    <location>
        <position position="159"/>
    </location>
    <ligand>
        <name>substrate</name>
    </ligand>
</feature>
<feature type="binding site" evidence="2">
    <location>
        <position position="191"/>
    </location>
    <ligand>
        <name>substrate</name>
    </ligand>
</feature>
<feature type="binding site" evidence="2">
    <location>
        <begin position="223"/>
        <end position="226"/>
    </location>
    <ligand>
        <name>substrate</name>
    </ligand>
</feature>
<comment type="function">
    <text evidence="2">Catalyzes the formation of N(7)-methylguanine at position 46 (m7G46) in tRNA.</text>
</comment>
<comment type="catalytic activity">
    <reaction evidence="2">
        <text>guanosine(46) in tRNA + S-adenosyl-L-methionine = N(7)-methylguanosine(46) in tRNA + S-adenosyl-L-homocysteine</text>
        <dbReference type="Rhea" id="RHEA:42708"/>
        <dbReference type="Rhea" id="RHEA-COMP:10188"/>
        <dbReference type="Rhea" id="RHEA-COMP:10189"/>
        <dbReference type="ChEBI" id="CHEBI:57856"/>
        <dbReference type="ChEBI" id="CHEBI:59789"/>
        <dbReference type="ChEBI" id="CHEBI:74269"/>
        <dbReference type="ChEBI" id="CHEBI:74480"/>
        <dbReference type="EC" id="2.1.1.33"/>
    </reaction>
</comment>
<comment type="pathway">
    <text evidence="2">tRNA modification; N(7)-methylguanine-tRNA biosynthesis.</text>
</comment>
<comment type="similarity">
    <text evidence="2">Belongs to the class I-like SAM-binding methyltransferase superfamily. TrmB family.</text>
</comment>
<keyword id="KW-0489">Methyltransferase</keyword>
<keyword id="KW-1185">Reference proteome</keyword>
<keyword id="KW-0949">S-adenosyl-L-methionine</keyword>
<keyword id="KW-0808">Transferase</keyword>
<keyword id="KW-0819">tRNA processing</keyword>
<gene>
    <name evidence="2" type="primary">trmB</name>
    <name type="ordered locus">Noca_3919</name>
</gene>
<sequence>MPEHAPDGVRPARPHHKLTADGRRMREVLTYSRRGSRFSPRQQQAWAAYAERWWVPDEAVDDPGFTLAGCFERSAPLIVEIGSGIGESTVALAAARPDHDVVAIEVWRPGVADTLGRIGAAGLSNVRLLSVDAVWSMAHLVEPDSLAALWTFFPDPWHKAKHHKRRLVTASFARLVAGRLAPGAEWRLATDWADYADQMVEVLDAEPMLEGGVVERWAERPVTKFERKGIAAGRAITDLAYRRRGAAR</sequence>
<evidence type="ECO:0000250" key="1"/>
<evidence type="ECO:0000255" key="2">
    <source>
        <dbReference type="HAMAP-Rule" id="MF_01057"/>
    </source>
</evidence>
<reference key="1">
    <citation type="submission" date="2006-12" db="EMBL/GenBank/DDBJ databases">
        <title>Complete sequence of chromosome 1 of Nocardioides sp. JS614.</title>
        <authorList>
            <person name="Copeland A."/>
            <person name="Lucas S."/>
            <person name="Lapidus A."/>
            <person name="Barry K."/>
            <person name="Detter J.C."/>
            <person name="Glavina del Rio T."/>
            <person name="Hammon N."/>
            <person name="Israni S."/>
            <person name="Dalin E."/>
            <person name="Tice H."/>
            <person name="Pitluck S."/>
            <person name="Thompson L.S."/>
            <person name="Brettin T."/>
            <person name="Bruce D."/>
            <person name="Han C."/>
            <person name="Tapia R."/>
            <person name="Schmutz J."/>
            <person name="Larimer F."/>
            <person name="Land M."/>
            <person name="Hauser L."/>
            <person name="Kyrpides N."/>
            <person name="Kim E."/>
            <person name="Mattes T."/>
            <person name="Gossett J."/>
            <person name="Richardson P."/>
        </authorList>
    </citation>
    <scope>NUCLEOTIDE SEQUENCE [LARGE SCALE GENOMIC DNA]</scope>
    <source>
        <strain>ATCC BAA-499 / JS614</strain>
    </source>
</reference>
<protein>
    <recommendedName>
        <fullName evidence="2">tRNA (guanine-N(7)-)-methyltransferase</fullName>
        <ecNumber evidence="2">2.1.1.33</ecNumber>
    </recommendedName>
    <alternativeName>
        <fullName evidence="2">tRNA (guanine(46)-N(7))-methyltransferase</fullName>
    </alternativeName>
    <alternativeName>
        <fullName evidence="2">tRNA(m7G46)-methyltransferase</fullName>
    </alternativeName>
</protein>
<accession>A1SNN2</accession>
<proteinExistence type="inferred from homology"/>